<accession>Q9P2K2</accession>
<accession>A5PKW9</accession>
<accession>A7E260</accession>
<accession>A7MD07</accession>
<accession>B9EH67</accession>
<accession>Q9H9W7</accession>
<feature type="signal peptide" evidence="1 6">
    <location>
        <begin position="1"/>
        <end position="27"/>
    </location>
</feature>
<feature type="chain" id="PRO_0000257789" description="Thioredoxin domain-containing protein 16">
    <location>
        <begin position="28"/>
        <end position="825"/>
    </location>
</feature>
<feature type="domain" description="Thioredoxin">
    <location>
        <begin position="392"/>
        <end position="495"/>
    </location>
</feature>
<feature type="region of interest" description="Disordered" evidence="2">
    <location>
        <begin position="762"/>
        <end position="787"/>
    </location>
</feature>
<feature type="short sequence motif" description="Mediates endoplasmic reticulum retention" evidence="6">
    <location>
        <begin position="816"/>
        <end position="819"/>
    </location>
</feature>
<feature type="compositionally biased region" description="Basic and acidic residues" evidence="2">
    <location>
        <begin position="767"/>
        <end position="787"/>
    </location>
</feature>
<feature type="glycosylation site" description="N-linked (GlcNAc...) asparagine" evidence="1">
    <location>
        <position position="460"/>
    </location>
</feature>
<feature type="disulfide bond" evidence="5">
    <location>
        <begin position="449"/>
        <end position="456"/>
    </location>
</feature>
<feature type="sequence variant" id="VAR_061899" description="In dbSNP:rs28759013.">
    <original>S</original>
    <variation>N</variation>
    <location>
        <position position="136"/>
    </location>
</feature>
<feature type="sequence variant" id="VAR_061900" description="In dbSNP:rs28593180.">
    <original>N</original>
    <variation>Y</variation>
    <location>
        <position position="152"/>
    </location>
</feature>
<feature type="sequence variant" id="VAR_028919" description="In dbSNP:rs7155490." evidence="3 4">
    <original>E</original>
    <variation>K</variation>
    <location>
        <position position="486"/>
    </location>
</feature>
<feature type="sequence conflict" description="In Ref. 1; BAA92582." evidence="8" ref="1">
    <original>A</original>
    <variation>G</variation>
    <location>
        <position position="180"/>
    </location>
</feature>
<proteinExistence type="evidence at protein level"/>
<name>TXD16_HUMAN</name>
<evidence type="ECO:0000255" key="1"/>
<evidence type="ECO:0000256" key="2">
    <source>
        <dbReference type="SAM" id="MobiDB-lite"/>
    </source>
</evidence>
<evidence type="ECO:0000269" key="3">
    <source>
    </source>
</evidence>
<evidence type="ECO:0000269" key="4">
    <source>
    </source>
</evidence>
<evidence type="ECO:0000269" key="5">
    <source>
    </source>
</evidence>
<evidence type="ECO:0000269" key="6">
    <source>
    </source>
</evidence>
<evidence type="ECO:0000303" key="7">
    <source>
    </source>
</evidence>
<evidence type="ECO:0000305" key="8"/>
<evidence type="ECO:0000312" key="9">
    <source>
        <dbReference type="HGNC" id="HGNC:19965"/>
    </source>
</evidence>
<reference key="1">
    <citation type="journal article" date="2000" name="DNA Res.">
        <title>Prediction of the coding sequences of unidentified human genes. XVI. The complete sequences of 150 new cDNA clones from brain which code for large proteins in vitro.</title>
        <authorList>
            <person name="Nagase T."/>
            <person name="Kikuno R."/>
            <person name="Ishikawa K."/>
            <person name="Hirosawa M."/>
            <person name="Ohara O."/>
        </authorList>
    </citation>
    <scope>NUCLEOTIDE SEQUENCE [LARGE SCALE MRNA]</scope>
    <scope>VARIANT LYS-486</scope>
    <source>
        <tissue>Brain</tissue>
    </source>
</reference>
<reference key="2">
    <citation type="journal article" date="2002" name="DNA Res.">
        <title>Construction of expression-ready cDNA clones for KIAA genes: manual curation of 330 KIAA cDNA clones.</title>
        <authorList>
            <person name="Nakajima D."/>
            <person name="Okazaki N."/>
            <person name="Yamakawa H."/>
            <person name="Kikuno R."/>
            <person name="Ohara O."/>
            <person name="Nagase T."/>
        </authorList>
    </citation>
    <scope>SEQUENCE REVISION</scope>
</reference>
<reference key="3">
    <citation type="submission" date="2005-09" db="EMBL/GenBank/DDBJ databases">
        <authorList>
            <person name="Mural R.J."/>
            <person name="Istrail S."/>
            <person name="Sutton G.G."/>
            <person name="Florea L."/>
            <person name="Halpern A.L."/>
            <person name="Mobarry C.M."/>
            <person name="Lippert R."/>
            <person name="Walenz B."/>
            <person name="Shatkay H."/>
            <person name="Dew I."/>
            <person name="Miller J.R."/>
            <person name="Flanigan M.J."/>
            <person name="Edwards N.J."/>
            <person name="Bolanos R."/>
            <person name="Fasulo D."/>
            <person name="Halldorsson B.V."/>
            <person name="Hannenhalli S."/>
            <person name="Turner R."/>
            <person name="Yooseph S."/>
            <person name="Lu F."/>
            <person name="Nusskern D.R."/>
            <person name="Shue B.C."/>
            <person name="Zheng X.H."/>
            <person name="Zhong F."/>
            <person name="Delcher A.L."/>
            <person name="Huson D.H."/>
            <person name="Kravitz S.A."/>
            <person name="Mouchard L."/>
            <person name="Reinert K."/>
            <person name="Remington K.A."/>
            <person name="Clark A.G."/>
            <person name="Waterman M.S."/>
            <person name="Eichler E.E."/>
            <person name="Adams M.D."/>
            <person name="Hunkapiller M.W."/>
            <person name="Myers E.W."/>
            <person name="Venter J.C."/>
        </authorList>
    </citation>
    <scope>NUCLEOTIDE SEQUENCE [LARGE SCALE GENOMIC DNA]</scope>
</reference>
<reference key="4">
    <citation type="journal article" date="2004" name="Genome Res.">
        <title>The status, quality, and expansion of the NIH full-length cDNA project: the Mammalian Gene Collection (MGC).</title>
        <authorList>
            <consortium name="The MGC Project Team"/>
        </authorList>
    </citation>
    <scope>NUCLEOTIDE SEQUENCE [LARGE SCALE MRNA]</scope>
    <scope>VARIANT LYS-486</scope>
    <source>
        <tissue>Lung</tissue>
        <tissue>Testis</tissue>
    </source>
</reference>
<reference key="5">
    <citation type="journal article" date="2004" name="Nat. Genet.">
        <title>Complete sequencing and characterization of 21,243 full-length human cDNAs.</title>
        <authorList>
            <person name="Ota T."/>
            <person name="Suzuki Y."/>
            <person name="Nishikawa T."/>
            <person name="Otsuki T."/>
            <person name="Sugiyama T."/>
            <person name="Irie R."/>
            <person name="Wakamatsu A."/>
            <person name="Hayashi K."/>
            <person name="Sato H."/>
            <person name="Nagai K."/>
            <person name="Kimura K."/>
            <person name="Makita H."/>
            <person name="Sekine M."/>
            <person name="Obayashi M."/>
            <person name="Nishi T."/>
            <person name="Shibahara T."/>
            <person name="Tanaka T."/>
            <person name="Ishii S."/>
            <person name="Yamamoto J."/>
            <person name="Saito K."/>
            <person name="Kawai Y."/>
            <person name="Isono Y."/>
            <person name="Nakamura Y."/>
            <person name="Nagahari K."/>
            <person name="Murakami K."/>
            <person name="Yasuda T."/>
            <person name="Iwayanagi T."/>
            <person name="Wagatsuma M."/>
            <person name="Shiratori A."/>
            <person name="Sudo H."/>
            <person name="Hosoiri T."/>
            <person name="Kaku Y."/>
            <person name="Kodaira H."/>
            <person name="Kondo H."/>
            <person name="Sugawara M."/>
            <person name="Takahashi M."/>
            <person name="Kanda K."/>
            <person name="Yokoi T."/>
            <person name="Furuya T."/>
            <person name="Kikkawa E."/>
            <person name="Omura Y."/>
            <person name="Abe K."/>
            <person name="Kamihara K."/>
            <person name="Katsuta N."/>
            <person name="Sato K."/>
            <person name="Tanikawa M."/>
            <person name="Yamazaki M."/>
            <person name="Ninomiya K."/>
            <person name="Ishibashi T."/>
            <person name="Yamashita H."/>
            <person name="Murakawa K."/>
            <person name="Fujimori K."/>
            <person name="Tanai H."/>
            <person name="Kimata M."/>
            <person name="Watanabe M."/>
            <person name="Hiraoka S."/>
            <person name="Chiba Y."/>
            <person name="Ishida S."/>
            <person name="Ono Y."/>
            <person name="Takiguchi S."/>
            <person name="Watanabe S."/>
            <person name="Yosida M."/>
            <person name="Hotuta T."/>
            <person name="Kusano J."/>
            <person name="Kanehori K."/>
            <person name="Takahashi-Fujii A."/>
            <person name="Hara H."/>
            <person name="Tanase T.-O."/>
            <person name="Nomura Y."/>
            <person name="Togiya S."/>
            <person name="Komai F."/>
            <person name="Hara R."/>
            <person name="Takeuchi K."/>
            <person name="Arita M."/>
            <person name="Imose N."/>
            <person name="Musashino K."/>
            <person name="Yuuki H."/>
            <person name="Oshima A."/>
            <person name="Sasaki N."/>
            <person name="Aotsuka S."/>
            <person name="Yoshikawa Y."/>
            <person name="Matsunawa H."/>
            <person name="Ichihara T."/>
            <person name="Shiohata N."/>
            <person name="Sano S."/>
            <person name="Moriya S."/>
            <person name="Momiyama H."/>
            <person name="Satoh N."/>
            <person name="Takami S."/>
            <person name="Terashima Y."/>
            <person name="Suzuki O."/>
            <person name="Nakagawa S."/>
            <person name="Senoh A."/>
            <person name="Mizoguchi H."/>
            <person name="Goto Y."/>
            <person name="Shimizu F."/>
            <person name="Wakebe H."/>
            <person name="Hishigaki H."/>
            <person name="Watanabe T."/>
            <person name="Sugiyama A."/>
            <person name="Takemoto M."/>
            <person name="Kawakami B."/>
            <person name="Yamazaki M."/>
            <person name="Watanabe K."/>
            <person name="Kumagai A."/>
            <person name="Itakura S."/>
            <person name="Fukuzumi Y."/>
            <person name="Fujimori Y."/>
            <person name="Komiyama M."/>
            <person name="Tashiro H."/>
            <person name="Tanigami A."/>
            <person name="Fujiwara T."/>
            <person name="Ono T."/>
            <person name="Yamada K."/>
            <person name="Fujii Y."/>
            <person name="Ozaki K."/>
            <person name="Hirao M."/>
            <person name="Ohmori Y."/>
            <person name="Kawabata A."/>
            <person name="Hikiji T."/>
            <person name="Kobatake N."/>
            <person name="Inagaki H."/>
            <person name="Ikema Y."/>
            <person name="Okamoto S."/>
            <person name="Okitani R."/>
            <person name="Kawakami T."/>
            <person name="Noguchi S."/>
            <person name="Itoh T."/>
            <person name="Shigeta K."/>
            <person name="Senba T."/>
            <person name="Matsumura K."/>
            <person name="Nakajima Y."/>
            <person name="Mizuno T."/>
            <person name="Morinaga M."/>
            <person name="Sasaki M."/>
            <person name="Togashi T."/>
            <person name="Oyama M."/>
            <person name="Hata H."/>
            <person name="Watanabe M."/>
            <person name="Komatsu T."/>
            <person name="Mizushima-Sugano J."/>
            <person name="Satoh T."/>
            <person name="Shirai Y."/>
            <person name="Takahashi Y."/>
            <person name="Nakagawa K."/>
            <person name="Okumura K."/>
            <person name="Nagase T."/>
            <person name="Nomura N."/>
            <person name="Kikuchi H."/>
            <person name="Masuho Y."/>
            <person name="Yamashita R."/>
            <person name="Nakai K."/>
            <person name="Yada T."/>
            <person name="Nakamura Y."/>
            <person name="Ohara O."/>
            <person name="Isogai T."/>
            <person name="Sugano S."/>
        </authorList>
    </citation>
    <scope>NUCLEOTIDE SEQUENCE [LARGE SCALE MRNA] OF 456-825</scope>
</reference>
<reference key="6">
    <citation type="journal article" date="2011" name="PLoS ONE">
        <title>Identification of the PDI-family member ERp90 as an interaction partner of ERFAD.</title>
        <authorList>
            <person name="Riemer J."/>
            <person name="Hansen H.G."/>
            <person name="Appenzeller-Herzog C."/>
            <person name="Johansson L."/>
            <person name="Ellgaard L."/>
        </authorList>
    </citation>
    <scope>SUBCELLULAR LOCATION</scope>
    <scope>INTERACTION WITH FOXRED2</scope>
    <scope>DISULFIDE BONDS</scope>
    <scope>GLYCOSYLATION</scope>
</reference>
<reference key="7">
    <citation type="journal article" date="2014" name="J. Immunol.">
        <title>Secretion and immunogenicity of the meningioma-associated antigen TXNDC16.</title>
        <authorList>
            <person name="Harz C."/>
            <person name="Ludwig N."/>
            <person name="Lang S."/>
            <person name="Werner T.V."/>
            <person name="Galata V."/>
            <person name="Backes C."/>
            <person name="Schmitt K."/>
            <person name="Nickels R."/>
            <person name="Krause E."/>
            <person name="Jung M."/>
            <person name="Rettig J."/>
            <person name="Keller A."/>
            <person name="Menger M."/>
            <person name="Zimmermann R."/>
            <person name="Meese E."/>
        </authorList>
    </citation>
    <scope>SUBCELLULAR LOCATION</scope>
</reference>
<organism>
    <name type="scientific">Homo sapiens</name>
    <name type="common">Human</name>
    <dbReference type="NCBI Taxonomy" id="9606"/>
    <lineage>
        <taxon>Eukaryota</taxon>
        <taxon>Metazoa</taxon>
        <taxon>Chordata</taxon>
        <taxon>Craniata</taxon>
        <taxon>Vertebrata</taxon>
        <taxon>Euteleostomi</taxon>
        <taxon>Mammalia</taxon>
        <taxon>Eutheria</taxon>
        <taxon>Euarchontoglires</taxon>
        <taxon>Primates</taxon>
        <taxon>Haplorrhini</taxon>
        <taxon>Catarrhini</taxon>
        <taxon>Hominidae</taxon>
        <taxon>Homo</taxon>
    </lineage>
</organism>
<sequence>MFSGFNVFRVGISFVIMCIFYMPTVNSLPELSPQKYFSTLQPGKASLAYFCQADSPRTSVFLEELNEAVRPLQDYGISVAKVNCVKEEISRYCGKEKDLMKAYLFKGNILLREFPTDTLFDVNAIVAHVLFALLFSEVKYITNLEDLQNIENALKGKANIIFSYVRAIGIPEHRAVMEAAFVYGTTYQFVLTTEIALLESIGSEDVEYAHLYFFHCKLVLDLTQQCRRTLMEQPLTTLNIHLFIKTMKAPLLTEVAEDPQQVSTVHLQLGLPLVFIVSQQATYEADRRTAEWVAWRLLGKAGVLLLLRDSLEVNIPQDANVVFKRAEEGVPVEFLVLHDVDLIISHVENNMHIEEIQEDEDNDMEGPDIDVQDDEVAETVFRDRKRKLPLELTVELTEETFNATVMASDSIVLFYAGWQAVSMAFLQSYIDVAVKLKGTSTMLLTRINCADWSDVCTKQNVTEFPIIKMYKKGENPVSYAGMLGTEDLLKFIQLNRISYPVNITSIQEAEEYLSGELYKDLILYSSVSVLGLFSPTMKTAKEDFSEAGNYLKGYVITGIYSEEDVLLLSTKYAASLPALLLARHTEGKIESIPLASTHAQDIVQIITDALLEMFPEITVENLPSYFRLQKPLLILFSDGTVNPQYKKAILTLVKQKYLDSFTPCWLNLKNTPVGRGILRAYFDPLPPLPLLVLVNLHSGGQVFAFPSDQAIIEENLVLWLKKLEAGLENHITILPAQEWKPPLPAYDFLSMIDAATSQRGTRKVPKCMKETDVQENDKEQHEDKSAVRKEPIETLRIKHWNRSNWFKEAEKSFRRDKELGCSKVN</sequence>
<gene>
    <name evidence="9" type="primary">TXNDC16</name>
    <name evidence="7" type="synonym">ERP90</name>
    <name type="synonym">KIAA1344</name>
</gene>
<comment type="subunit">
    <text evidence="5">Interacts with FOXRED2.</text>
</comment>
<comment type="subcellular location">
    <subcellularLocation>
        <location evidence="6">Secreted</location>
    </subcellularLocation>
    <subcellularLocation>
        <location evidence="5 6">Endoplasmic reticulum lumen</location>
    </subcellularLocation>
</comment>
<comment type="domain">
    <text evidence="6">Contains a masked and non-functional KDEL endoplasmic reticulum retrieval motif.</text>
</comment>
<comment type="PTM">
    <text evidence="5">Glycosylated.</text>
</comment>
<comment type="sequence caution" evidence="8">
    <conflict type="erroneous initiation">
        <sequence resource="EMBL-CDS" id="BAB14101"/>
    </conflict>
    <text>Truncated N-terminus.</text>
</comment>
<keyword id="KW-1015">Disulfide bond</keyword>
<keyword id="KW-0256">Endoplasmic reticulum</keyword>
<keyword id="KW-0325">Glycoprotein</keyword>
<keyword id="KW-1267">Proteomics identification</keyword>
<keyword id="KW-1185">Reference proteome</keyword>
<keyword id="KW-0964">Secreted</keyword>
<keyword id="KW-0732">Signal</keyword>
<protein>
    <recommendedName>
        <fullName evidence="9">Thioredoxin domain-containing protein 16</fullName>
    </recommendedName>
</protein>
<dbReference type="EMBL" id="AB037765">
    <property type="protein sequence ID" value="BAA92582.2"/>
    <property type="molecule type" value="mRNA"/>
</dbReference>
<dbReference type="EMBL" id="CH471078">
    <property type="protein sequence ID" value="EAW65650.1"/>
    <property type="molecule type" value="Genomic_DNA"/>
</dbReference>
<dbReference type="EMBL" id="BC137081">
    <property type="protein sequence ID" value="AAI37082.1"/>
    <property type="molecule type" value="mRNA"/>
</dbReference>
<dbReference type="EMBL" id="BC137082">
    <property type="protein sequence ID" value="AAI37083.1"/>
    <property type="molecule type" value="mRNA"/>
</dbReference>
<dbReference type="EMBL" id="BC142650">
    <property type="protein sequence ID" value="AAI42651.1"/>
    <property type="molecule type" value="mRNA"/>
</dbReference>
<dbReference type="EMBL" id="BC150205">
    <property type="protein sequence ID" value="AAI50206.1"/>
    <property type="molecule type" value="mRNA"/>
</dbReference>
<dbReference type="EMBL" id="BC152428">
    <property type="protein sequence ID" value="AAI52429.1"/>
    <property type="molecule type" value="mRNA"/>
</dbReference>
<dbReference type="EMBL" id="AK022563">
    <property type="protein sequence ID" value="BAB14101.1"/>
    <property type="status" value="ALT_INIT"/>
    <property type="molecule type" value="mRNA"/>
</dbReference>
<dbReference type="CCDS" id="CCDS32083.1"/>
<dbReference type="RefSeq" id="NP_001153519.1">
    <property type="nucleotide sequence ID" value="NM_001160047.1"/>
</dbReference>
<dbReference type="RefSeq" id="NP_065835.2">
    <property type="nucleotide sequence ID" value="NM_020784.3"/>
</dbReference>
<dbReference type="SMR" id="Q9P2K2"/>
<dbReference type="BioGRID" id="121602">
    <property type="interactions" value="62"/>
</dbReference>
<dbReference type="FunCoup" id="Q9P2K2">
    <property type="interactions" value="728"/>
</dbReference>
<dbReference type="IntAct" id="Q9P2K2">
    <property type="interactions" value="52"/>
</dbReference>
<dbReference type="STRING" id="9606.ENSP00000281741"/>
<dbReference type="GlyCosmos" id="Q9P2K2">
    <property type="glycosylation" value="1 site, No reported glycans"/>
</dbReference>
<dbReference type="GlyGen" id="Q9P2K2">
    <property type="glycosylation" value="1 site, 3 N-linked glycans (1 site)"/>
</dbReference>
<dbReference type="iPTMnet" id="Q9P2K2"/>
<dbReference type="PhosphoSitePlus" id="Q9P2K2"/>
<dbReference type="BioMuta" id="TXNDC16"/>
<dbReference type="DMDM" id="212276524"/>
<dbReference type="jPOST" id="Q9P2K2"/>
<dbReference type="MassIVE" id="Q9P2K2"/>
<dbReference type="PaxDb" id="9606-ENSP00000281741"/>
<dbReference type="PeptideAtlas" id="Q9P2K2"/>
<dbReference type="ProteomicsDB" id="83828"/>
<dbReference type="Pumba" id="Q9P2K2"/>
<dbReference type="Antibodypedia" id="149">
    <property type="antibodies" value="36 antibodies from 15 providers"/>
</dbReference>
<dbReference type="DNASU" id="57544"/>
<dbReference type="Ensembl" id="ENST00000281741.9">
    <property type="protein sequence ID" value="ENSP00000281741.4"/>
    <property type="gene ID" value="ENSG00000087301.10"/>
</dbReference>
<dbReference type="GeneID" id="57544"/>
<dbReference type="KEGG" id="hsa:57544"/>
<dbReference type="MANE-Select" id="ENST00000281741.9">
    <property type="protein sequence ID" value="ENSP00000281741.4"/>
    <property type="RefSeq nucleotide sequence ID" value="NM_020784.3"/>
    <property type="RefSeq protein sequence ID" value="NP_065835.2"/>
</dbReference>
<dbReference type="UCSC" id="uc001wzs.4">
    <property type="organism name" value="human"/>
</dbReference>
<dbReference type="AGR" id="HGNC:19965"/>
<dbReference type="CTD" id="57544"/>
<dbReference type="GeneCards" id="TXNDC16"/>
<dbReference type="HGNC" id="HGNC:19965">
    <property type="gene designation" value="TXNDC16"/>
</dbReference>
<dbReference type="HPA" id="ENSG00000087301">
    <property type="expression patterns" value="Low tissue specificity"/>
</dbReference>
<dbReference type="MIM" id="616179">
    <property type="type" value="gene"/>
</dbReference>
<dbReference type="neXtProt" id="NX_Q9P2K2"/>
<dbReference type="OpenTargets" id="ENSG00000087301"/>
<dbReference type="PharmGKB" id="PA162407488"/>
<dbReference type="VEuPathDB" id="HostDB:ENSG00000087301"/>
<dbReference type="eggNOG" id="KOG0191">
    <property type="taxonomic scope" value="Eukaryota"/>
</dbReference>
<dbReference type="GeneTree" id="ENSGT00390000006080"/>
<dbReference type="HOGENOM" id="CLU_018100_1_0_1"/>
<dbReference type="InParanoid" id="Q9P2K2"/>
<dbReference type="OMA" id="CRRTLMG"/>
<dbReference type="OrthoDB" id="427280at2759"/>
<dbReference type="PAN-GO" id="Q9P2K2">
    <property type="GO annotations" value="0 GO annotations based on evolutionary models"/>
</dbReference>
<dbReference type="PhylomeDB" id="Q9P2K2"/>
<dbReference type="TreeFam" id="TF328825"/>
<dbReference type="PathwayCommons" id="Q9P2K2"/>
<dbReference type="SignaLink" id="Q9P2K2"/>
<dbReference type="BioGRID-ORCS" id="57544">
    <property type="hits" value="10 hits in 1152 CRISPR screens"/>
</dbReference>
<dbReference type="ChiTaRS" id="TXNDC16">
    <property type="organism name" value="human"/>
</dbReference>
<dbReference type="GenomeRNAi" id="57544"/>
<dbReference type="Pharos" id="Q9P2K2">
    <property type="development level" value="Tdark"/>
</dbReference>
<dbReference type="PRO" id="PR:Q9P2K2"/>
<dbReference type="Proteomes" id="UP000005640">
    <property type="component" value="Chromosome 14"/>
</dbReference>
<dbReference type="RNAct" id="Q9P2K2">
    <property type="molecule type" value="protein"/>
</dbReference>
<dbReference type="Bgee" id="ENSG00000087301">
    <property type="expression patterns" value="Expressed in seminal vesicle and 179 other cell types or tissues"/>
</dbReference>
<dbReference type="ExpressionAtlas" id="Q9P2K2">
    <property type="expression patterns" value="baseline and differential"/>
</dbReference>
<dbReference type="GO" id="GO:0005788">
    <property type="term" value="C:endoplasmic reticulum lumen"/>
    <property type="evidence" value="ECO:0000314"/>
    <property type="project" value="UniProtKB"/>
</dbReference>
<dbReference type="GO" id="GO:0070062">
    <property type="term" value="C:extracellular exosome"/>
    <property type="evidence" value="ECO:0007005"/>
    <property type="project" value="UniProtKB"/>
</dbReference>
<dbReference type="CDD" id="cd02961">
    <property type="entry name" value="PDI_a_family"/>
    <property type="match status" value="1"/>
</dbReference>
<dbReference type="FunFam" id="3.40.30.10:FF:000226">
    <property type="entry name" value="Thioredoxin domain containing 16"/>
    <property type="match status" value="1"/>
</dbReference>
<dbReference type="Gene3D" id="3.40.30.10">
    <property type="entry name" value="Glutaredoxin"/>
    <property type="match status" value="1"/>
</dbReference>
<dbReference type="InterPro" id="IPR036249">
    <property type="entry name" value="Thioredoxin-like_sf"/>
</dbReference>
<dbReference type="InterPro" id="IPR013766">
    <property type="entry name" value="Thioredoxin_domain"/>
</dbReference>
<dbReference type="InterPro" id="IPR040090">
    <property type="entry name" value="TXNDC16"/>
</dbReference>
<dbReference type="PANTHER" id="PTHR22699">
    <property type="entry name" value="THIOREDOXIN DOMAIN-CONTAINING PROTEIN 16"/>
    <property type="match status" value="1"/>
</dbReference>
<dbReference type="PANTHER" id="PTHR22699:SF1">
    <property type="entry name" value="THIOREDOXIN DOMAIN-CONTAINING PROTEIN 16"/>
    <property type="match status" value="1"/>
</dbReference>
<dbReference type="Pfam" id="PF00085">
    <property type="entry name" value="Thioredoxin"/>
    <property type="match status" value="1"/>
</dbReference>
<dbReference type="Pfam" id="PF13848">
    <property type="entry name" value="Thioredoxin_6"/>
    <property type="match status" value="1"/>
</dbReference>
<dbReference type="Pfam" id="PF24509">
    <property type="entry name" value="TXNDC16_2nd"/>
    <property type="match status" value="1"/>
</dbReference>
<dbReference type="Pfam" id="PF24510">
    <property type="entry name" value="TXNDC16_3rd"/>
    <property type="match status" value="1"/>
</dbReference>
<dbReference type="Pfam" id="PF24508">
    <property type="entry name" value="TXNDC16_N"/>
    <property type="match status" value="1"/>
</dbReference>
<dbReference type="SUPFAM" id="SSF52833">
    <property type="entry name" value="Thioredoxin-like"/>
    <property type="match status" value="1"/>
</dbReference>